<comment type="function">
    <text evidence="2">Catalyzes the specific phosphorylation of the 3-hydroxyl group of shikimic acid using ATP as a cosubstrate.</text>
</comment>
<comment type="catalytic activity">
    <reaction evidence="2">
        <text>shikimate + ATP = 3-phosphoshikimate + ADP + H(+)</text>
        <dbReference type="Rhea" id="RHEA:13121"/>
        <dbReference type="ChEBI" id="CHEBI:15378"/>
        <dbReference type="ChEBI" id="CHEBI:30616"/>
        <dbReference type="ChEBI" id="CHEBI:36208"/>
        <dbReference type="ChEBI" id="CHEBI:145989"/>
        <dbReference type="ChEBI" id="CHEBI:456216"/>
        <dbReference type="EC" id="2.7.1.71"/>
    </reaction>
</comment>
<comment type="cofactor">
    <cofactor evidence="2">
        <name>Mg(2+)</name>
        <dbReference type="ChEBI" id="CHEBI:18420"/>
    </cofactor>
    <text evidence="2">Binds 1 Mg(2+) ion per subunit.</text>
</comment>
<comment type="pathway">
    <text evidence="2">Metabolic intermediate biosynthesis; chorismate biosynthesis; chorismate from D-erythrose 4-phosphate and phosphoenolpyruvate: step 5/7.</text>
</comment>
<comment type="subunit">
    <text evidence="2">Monomer.</text>
</comment>
<comment type="subcellular location">
    <subcellularLocation>
        <location evidence="2">Cytoplasm</location>
    </subcellularLocation>
</comment>
<comment type="similarity">
    <text evidence="2">Belongs to the shikimate kinase family.</text>
</comment>
<evidence type="ECO:0000250" key="1"/>
<evidence type="ECO:0000255" key="2">
    <source>
        <dbReference type="HAMAP-Rule" id="MF_00109"/>
    </source>
</evidence>
<reference key="1">
    <citation type="journal article" date="2001" name="Nature">
        <title>Complete genome sequence of a multiple drug resistant Salmonella enterica serovar Typhi CT18.</title>
        <authorList>
            <person name="Parkhill J."/>
            <person name="Dougan G."/>
            <person name="James K.D."/>
            <person name="Thomson N.R."/>
            <person name="Pickard D."/>
            <person name="Wain J."/>
            <person name="Churcher C.M."/>
            <person name="Mungall K.L."/>
            <person name="Bentley S.D."/>
            <person name="Holden M.T.G."/>
            <person name="Sebaihia M."/>
            <person name="Baker S."/>
            <person name="Basham D."/>
            <person name="Brooks K."/>
            <person name="Chillingworth T."/>
            <person name="Connerton P."/>
            <person name="Cronin A."/>
            <person name="Davis P."/>
            <person name="Davies R.M."/>
            <person name="Dowd L."/>
            <person name="White N."/>
            <person name="Farrar J."/>
            <person name="Feltwell T."/>
            <person name="Hamlin N."/>
            <person name="Haque A."/>
            <person name="Hien T.T."/>
            <person name="Holroyd S."/>
            <person name="Jagels K."/>
            <person name="Krogh A."/>
            <person name="Larsen T.S."/>
            <person name="Leather S."/>
            <person name="Moule S."/>
            <person name="O'Gaora P."/>
            <person name="Parry C."/>
            <person name="Quail M.A."/>
            <person name="Rutherford K.M."/>
            <person name="Simmonds M."/>
            <person name="Skelton J."/>
            <person name="Stevens K."/>
            <person name="Whitehead S."/>
            <person name="Barrell B.G."/>
        </authorList>
    </citation>
    <scope>NUCLEOTIDE SEQUENCE [LARGE SCALE GENOMIC DNA]</scope>
    <source>
        <strain>CT18</strain>
    </source>
</reference>
<reference key="2">
    <citation type="journal article" date="2003" name="J. Bacteriol.">
        <title>Comparative genomics of Salmonella enterica serovar Typhi strains Ty2 and CT18.</title>
        <authorList>
            <person name="Deng W."/>
            <person name="Liou S.-R."/>
            <person name="Plunkett G. III"/>
            <person name="Mayhew G.F."/>
            <person name="Rose D.J."/>
            <person name="Burland V."/>
            <person name="Kodoyianni V."/>
            <person name="Schwartz D.C."/>
            <person name="Blattner F.R."/>
        </authorList>
    </citation>
    <scope>NUCLEOTIDE SEQUENCE [LARGE SCALE GENOMIC DNA]</scope>
    <source>
        <strain>ATCC 700931 / Ty2</strain>
    </source>
</reference>
<keyword id="KW-0028">Amino-acid biosynthesis</keyword>
<keyword id="KW-0057">Aromatic amino acid biosynthesis</keyword>
<keyword id="KW-0067">ATP-binding</keyword>
<keyword id="KW-0963">Cytoplasm</keyword>
<keyword id="KW-0418">Kinase</keyword>
<keyword id="KW-0460">Magnesium</keyword>
<keyword id="KW-0479">Metal-binding</keyword>
<keyword id="KW-0547">Nucleotide-binding</keyword>
<keyword id="KW-0808">Transferase</keyword>
<gene>
    <name evidence="2" type="primary">aroK</name>
    <name type="ordered locus">STY4309</name>
    <name type="ordered locus">t4019</name>
</gene>
<accession>P63602</accession>
<accession>Q8XFE9</accession>
<protein>
    <recommendedName>
        <fullName evidence="2">Shikimate kinase 1</fullName>
        <shortName evidence="2">SK 1</shortName>
        <ecNumber evidence="2">2.7.1.71</ecNumber>
    </recommendedName>
</protein>
<sequence>MAEKRNIFLVGPMGAGKSTIGRQLAQQLNMEFYDSDQEIEKRTGADVGWVFDVEGEDGFRNREEKVINELTEKQGIVLATGGGSVKSRETRNRLSARGVVVYLETTIEKQLARTQRDKKRPLLQVEAPPREVLEALANERNPLYEEIADVTIRTDDQSAKVVANQIIHMLESN</sequence>
<proteinExistence type="inferred from homology"/>
<dbReference type="EC" id="2.7.1.71" evidence="2"/>
<dbReference type="EMBL" id="AL513382">
    <property type="protein sequence ID" value="CAD08127.1"/>
    <property type="molecule type" value="Genomic_DNA"/>
</dbReference>
<dbReference type="EMBL" id="AE014613">
    <property type="protein sequence ID" value="AAO71489.1"/>
    <property type="molecule type" value="Genomic_DNA"/>
</dbReference>
<dbReference type="RefSeq" id="NP_458417.1">
    <property type="nucleotide sequence ID" value="NC_003198.1"/>
</dbReference>
<dbReference type="RefSeq" id="WP_000818621.1">
    <property type="nucleotide sequence ID" value="NZ_WSUR01000001.1"/>
</dbReference>
<dbReference type="SMR" id="P63602"/>
<dbReference type="STRING" id="220341.gene:17588140"/>
<dbReference type="GeneID" id="66757820"/>
<dbReference type="KEGG" id="stt:t4019"/>
<dbReference type="KEGG" id="sty:STY4309"/>
<dbReference type="PATRIC" id="fig|220341.7.peg.4404"/>
<dbReference type="eggNOG" id="COG0703">
    <property type="taxonomic scope" value="Bacteria"/>
</dbReference>
<dbReference type="HOGENOM" id="CLU_057607_2_2_6"/>
<dbReference type="OMA" id="FMGCGKS"/>
<dbReference type="OrthoDB" id="9800332at2"/>
<dbReference type="UniPathway" id="UPA00053">
    <property type="reaction ID" value="UER00088"/>
</dbReference>
<dbReference type="Proteomes" id="UP000000541">
    <property type="component" value="Chromosome"/>
</dbReference>
<dbReference type="Proteomes" id="UP000002670">
    <property type="component" value="Chromosome"/>
</dbReference>
<dbReference type="GO" id="GO:0005829">
    <property type="term" value="C:cytosol"/>
    <property type="evidence" value="ECO:0007669"/>
    <property type="project" value="TreeGrafter"/>
</dbReference>
<dbReference type="GO" id="GO:0005524">
    <property type="term" value="F:ATP binding"/>
    <property type="evidence" value="ECO:0007669"/>
    <property type="project" value="UniProtKB-UniRule"/>
</dbReference>
<dbReference type="GO" id="GO:0000287">
    <property type="term" value="F:magnesium ion binding"/>
    <property type="evidence" value="ECO:0007669"/>
    <property type="project" value="UniProtKB-UniRule"/>
</dbReference>
<dbReference type="GO" id="GO:0004765">
    <property type="term" value="F:shikimate kinase activity"/>
    <property type="evidence" value="ECO:0007669"/>
    <property type="project" value="UniProtKB-UniRule"/>
</dbReference>
<dbReference type="GO" id="GO:0008652">
    <property type="term" value="P:amino acid biosynthetic process"/>
    <property type="evidence" value="ECO:0007669"/>
    <property type="project" value="UniProtKB-KW"/>
</dbReference>
<dbReference type="GO" id="GO:0009073">
    <property type="term" value="P:aromatic amino acid family biosynthetic process"/>
    <property type="evidence" value="ECO:0007669"/>
    <property type="project" value="UniProtKB-KW"/>
</dbReference>
<dbReference type="GO" id="GO:0009423">
    <property type="term" value="P:chorismate biosynthetic process"/>
    <property type="evidence" value="ECO:0007669"/>
    <property type="project" value="UniProtKB-UniRule"/>
</dbReference>
<dbReference type="CDD" id="cd00464">
    <property type="entry name" value="SK"/>
    <property type="match status" value="1"/>
</dbReference>
<dbReference type="FunFam" id="3.40.50.300:FF:000099">
    <property type="entry name" value="Shikimate kinase 1"/>
    <property type="match status" value="1"/>
</dbReference>
<dbReference type="Gene3D" id="3.40.50.300">
    <property type="entry name" value="P-loop containing nucleotide triphosphate hydrolases"/>
    <property type="match status" value="1"/>
</dbReference>
<dbReference type="HAMAP" id="MF_00109">
    <property type="entry name" value="Shikimate_kinase"/>
    <property type="match status" value="1"/>
</dbReference>
<dbReference type="InterPro" id="IPR027417">
    <property type="entry name" value="P-loop_NTPase"/>
</dbReference>
<dbReference type="InterPro" id="IPR031322">
    <property type="entry name" value="Shikimate/glucono_kinase"/>
</dbReference>
<dbReference type="InterPro" id="IPR000623">
    <property type="entry name" value="Shikimate_kinase/TSH1"/>
</dbReference>
<dbReference type="InterPro" id="IPR023000">
    <property type="entry name" value="Shikimate_kinase_CS"/>
</dbReference>
<dbReference type="NCBIfam" id="NF003456">
    <property type="entry name" value="PRK05057.1"/>
    <property type="match status" value="1"/>
</dbReference>
<dbReference type="PANTHER" id="PTHR21087">
    <property type="entry name" value="SHIKIMATE KINASE"/>
    <property type="match status" value="1"/>
</dbReference>
<dbReference type="PANTHER" id="PTHR21087:SF16">
    <property type="entry name" value="SHIKIMATE KINASE 1, CHLOROPLASTIC"/>
    <property type="match status" value="1"/>
</dbReference>
<dbReference type="Pfam" id="PF01202">
    <property type="entry name" value="SKI"/>
    <property type="match status" value="1"/>
</dbReference>
<dbReference type="PRINTS" id="PR01100">
    <property type="entry name" value="SHIKIMTKNASE"/>
</dbReference>
<dbReference type="SUPFAM" id="SSF52540">
    <property type="entry name" value="P-loop containing nucleoside triphosphate hydrolases"/>
    <property type="match status" value="1"/>
</dbReference>
<dbReference type="PROSITE" id="PS01128">
    <property type="entry name" value="SHIKIMATE_KINASE"/>
    <property type="match status" value="1"/>
</dbReference>
<organism>
    <name type="scientific">Salmonella typhi</name>
    <dbReference type="NCBI Taxonomy" id="90370"/>
    <lineage>
        <taxon>Bacteria</taxon>
        <taxon>Pseudomonadati</taxon>
        <taxon>Pseudomonadota</taxon>
        <taxon>Gammaproteobacteria</taxon>
        <taxon>Enterobacterales</taxon>
        <taxon>Enterobacteriaceae</taxon>
        <taxon>Salmonella</taxon>
    </lineage>
</organism>
<name>AROK_SALTI</name>
<feature type="initiator methionine" description="Removed" evidence="1">
    <location>
        <position position="1"/>
    </location>
</feature>
<feature type="chain" id="PRO_0000192404" description="Shikimate kinase 1">
    <location>
        <begin position="2"/>
        <end position="173"/>
    </location>
</feature>
<feature type="binding site" evidence="2">
    <location>
        <begin position="14"/>
        <end position="19"/>
    </location>
    <ligand>
        <name>ATP</name>
        <dbReference type="ChEBI" id="CHEBI:30616"/>
    </ligand>
</feature>
<feature type="binding site" evidence="2">
    <location>
        <position position="18"/>
    </location>
    <ligand>
        <name>Mg(2+)</name>
        <dbReference type="ChEBI" id="CHEBI:18420"/>
    </ligand>
</feature>
<feature type="binding site" evidence="2">
    <location>
        <position position="36"/>
    </location>
    <ligand>
        <name>substrate</name>
    </ligand>
</feature>
<feature type="binding site" evidence="2">
    <location>
        <position position="60"/>
    </location>
    <ligand>
        <name>substrate</name>
    </ligand>
</feature>
<feature type="binding site" evidence="2">
    <location>
        <position position="82"/>
    </location>
    <ligand>
        <name>substrate</name>
    </ligand>
</feature>
<feature type="binding site" evidence="2">
    <location>
        <position position="120"/>
    </location>
    <ligand>
        <name>ATP</name>
        <dbReference type="ChEBI" id="CHEBI:30616"/>
    </ligand>
</feature>
<feature type="binding site" evidence="2">
    <location>
        <position position="140"/>
    </location>
    <ligand>
        <name>substrate</name>
    </ligand>
</feature>
<feature type="binding site" evidence="2">
    <location>
        <position position="157"/>
    </location>
    <ligand>
        <name>ATP</name>
        <dbReference type="ChEBI" id="CHEBI:30616"/>
    </ligand>
</feature>